<dbReference type="EC" id="3.1.5.1" evidence="1"/>
<dbReference type="EMBL" id="AP009240">
    <property type="protein sequence ID" value="BAG75685.1"/>
    <property type="molecule type" value="Genomic_DNA"/>
</dbReference>
<dbReference type="RefSeq" id="WP_000057094.1">
    <property type="nucleotide sequence ID" value="NC_011415.1"/>
</dbReference>
<dbReference type="SMR" id="B6HZD6"/>
<dbReference type="GeneID" id="75202025"/>
<dbReference type="KEGG" id="ecy:ECSE_0161"/>
<dbReference type="HOGENOM" id="CLU_028163_2_1_6"/>
<dbReference type="Proteomes" id="UP000008199">
    <property type="component" value="Chromosome"/>
</dbReference>
<dbReference type="GO" id="GO:0008832">
    <property type="term" value="F:dGTPase activity"/>
    <property type="evidence" value="ECO:0007669"/>
    <property type="project" value="UniProtKB-UniRule"/>
</dbReference>
<dbReference type="GO" id="GO:0000287">
    <property type="term" value="F:magnesium ion binding"/>
    <property type="evidence" value="ECO:0007669"/>
    <property type="project" value="UniProtKB-UniRule"/>
</dbReference>
<dbReference type="GO" id="GO:0006203">
    <property type="term" value="P:dGTP catabolic process"/>
    <property type="evidence" value="ECO:0007669"/>
    <property type="project" value="InterPro"/>
</dbReference>
<dbReference type="CDD" id="cd00077">
    <property type="entry name" value="HDc"/>
    <property type="match status" value="1"/>
</dbReference>
<dbReference type="FunFam" id="1.10.3210.10:FF:000009">
    <property type="entry name" value="Deoxyguanosinetriphosphate triphosphohydrolase"/>
    <property type="match status" value="1"/>
</dbReference>
<dbReference type="FunFam" id="1.10.3210.10:FF:000010">
    <property type="entry name" value="Deoxyguanosinetriphosphate triphosphohydrolase"/>
    <property type="match status" value="1"/>
</dbReference>
<dbReference type="FunFam" id="1.10.3410.10:FF:000001">
    <property type="entry name" value="Deoxyguanosinetriphosphate triphosphohydrolase"/>
    <property type="match status" value="1"/>
</dbReference>
<dbReference type="Gene3D" id="1.10.3210.10">
    <property type="entry name" value="Hypothetical protein af1432"/>
    <property type="match status" value="2"/>
</dbReference>
<dbReference type="Gene3D" id="1.10.3410.10">
    <property type="entry name" value="putative deoxyguanosinetriphosphate triphosphohydrolase like domain"/>
    <property type="match status" value="1"/>
</dbReference>
<dbReference type="HAMAP" id="MF_00030">
    <property type="entry name" value="dGTPase_type1"/>
    <property type="match status" value="1"/>
</dbReference>
<dbReference type="InterPro" id="IPR023293">
    <property type="entry name" value="dGTP_triP_hydro_central_sf"/>
</dbReference>
<dbReference type="InterPro" id="IPR006261">
    <property type="entry name" value="dGTPase"/>
</dbReference>
<dbReference type="InterPro" id="IPR050135">
    <property type="entry name" value="dGTPase-like"/>
</dbReference>
<dbReference type="InterPro" id="IPR020779">
    <property type="entry name" value="dNTPase_1"/>
</dbReference>
<dbReference type="InterPro" id="IPR003607">
    <property type="entry name" value="HD/PDEase_dom"/>
</dbReference>
<dbReference type="InterPro" id="IPR006674">
    <property type="entry name" value="HD_domain"/>
</dbReference>
<dbReference type="NCBIfam" id="TIGR01353">
    <property type="entry name" value="dGTP_triPase"/>
    <property type="match status" value="1"/>
</dbReference>
<dbReference type="NCBIfam" id="NF003429">
    <property type="entry name" value="PRK04926.1"/>
    <property type="match status" value="1"/>
</dbReference>
<dbReference type="PANTHER" id="PTHR11373:SF32">
    <property type="entry name" value="DEOXYGUANOSINETRIPHOSPHATE TRIPHOSPHOHYDROLASE"/>
    <property type="match status" value="1"/>
</dbReference>
<dbReference type="PANTHER" id="PTHR11373">
    <property type="entry name" value="DEOXYNUCLEOSIDE TRIPHOSPHATE TRIPHOSPHOHYDROLASE"/>
    <property type="match status" value="1"/>
</dbReference>
<dbReference type="Pfam" id="PF01966">
    <property type="entry name" value="HD"/>
    <property type="match status" value="1"/>
</dbReference>
<dbReference type="SMART" id="SM00471">
    <property type="entry name" value="HDc"/>
    <property type="match status" value="1"/>
</dbReference>
<dbReference type="SUPFAM" id="SSF109604">
    <property type="entry name" value="HD-domain/PDEase-like"/>
    <property type="match status" value="1"/>
</dbReference>
<dbReference type="PROSITE" id="PS51831">
    <property type="entry name" value="HD"/>
    <property type="match status" value="1"/>
</dbReference>
<evidence type="ECO:0000255" key="1">
    <source>
        <dbReference type="HAMAP-Rule" id="MF_00030"/>
    </source>
</evidence>
<evidence type="ECO:0000255" key="2">
    <source>
        <dbReference type="PROSITE-ProRule" id="PRU01175"/>
    </source>
</evidence>
<organism>
    <name type="scientific">Escherichia coli (strain SE11)</name>
    <dbReference type="NCBI Taxonomy" id="409438"/>
    <lineage>
        <taxon>Bacteria</taxon>
        <taxon>Pseudomonadati</taxon>
        <taxon>Pseudomonadota</taxon>
        <taxon>Gammaproteobacteria</taxon>
        <taxon>Enterobacterales</taxon>
        <taxon>Enterobacteriaceae</taxon>
        <taxon>Escherichia</taxon>
    </lineage>
</organism>
<name>DGTP_ECOSE</name>
<proteinExistence type="inferred from homology"/>
<keyword id="KW-0378">Hydrolase</keyword>
<keyword id="KW-0460">Magnesium</keyword>
<feature type="chain" id="PRO_1000090261" description="Deoxyguanosinetriphosphate triphosphohydrolase">
    <location>
        <begin position="1"/>
        <end position="505"/>
    </location>
</feature>
<feature type="domain" description="HD" evidence="2">
    <location>
        <begin position="66"/>
        <end position="273"/>
    </location>
</feature>
<sequence>MAQIDFRKKINWHRRYRSPQGVKTEHEILRIFESDRGRIINSPAIRRLQQKTQVFPLERNAAVRTRLTHSMEVQQVGRYIAKEILSRLKELKLLEAYGLDELTGPFESIVEMSCLMHDIGNPPFGHFGEAAINDWFRQRLYPEDAESQPLTDDRCSVAALRLRDGEEPLNELRRKIRQDLCHFEGNAQGIRLVHTLMRMNLTWAQVGGILKYTRPAWWRGETPETHHYLMKKPGYYLSEEAYIARLRKELNLALYSRFPLTWIMEAADDISYCVADLEDAVEKRIFTVEQLYHHLHEAWGQHEKGSLFSLVVENAWEKSRSNSLSRSTEDQFFMYLRVNTLNKLVPYAAQRFIDNLPAIFAGTFNHALLEDASECSDLLKLYKNVAVKHVFSHPDVEQLELQGYRVISGLLEIYRPLLSLSLSDFTELVEKERVKRFPIESRLFHKLSTRHRLAYVEAVSKLPSDSPEFPLWEYYYRCRLLQDYISGMTDLYAWDEYRRLMAVEQ</sequence>
<accession>B6HZD6</accession>
<protein>
    <recommendedName>
        <fullName evidence="1">Deoxyguanosinetriphosphate triphosphohydrolase</fullName>
        <shortName evidence="1">dGTP triphosphohydrolase</shortName>
        <shortName evidence="1">dGTPase</shortName>
        <ecNumber evidence="1">3.1.5.1</ecNumber>
    </recommendedName>
</protein>
<comment type="function">
    <text evidence="1">dGTPase preferentially hydrolyzes dGTP over the other canonical NTPs.</text>
</comment>
<comment type="catalytic activity">
    <reaction evidence="1">
        <text>dGTP + H2O = 2'-deoxyguanosine + triphosphate + H(+)</text>
        <dbReference type="Rhea" id="RHEA:15193"/>
        <dbReference type="ChEBI" id="CHEBI:15377"/>
        <dbReference type="ChEBI" id="CHEBI:15378"/>
        <dbReference type="ChEBI" id="CHEBI:17172"/>
        <dbReference type="ChEBI" id="CHEBI:18036"/>
        <dbReference type="ChEBI" id="CHEBI:61429"/>
        <dbReference type="EC" id="3.1.5.1"/>
    </reaction>
</comment>
<comment type="cofactor">
    <cofactor evidence="1">
        <name>Mg(2+)</name>
        <dbReference type="ChEBI" id="CHEBI:18420"/>
    </cofactor>
</comment>
<comment type="subunit">
    <text evidence="1">Homotetramer.</text>
</comment>
<comment type="similarity">
    <text evidence="1">Belongs to the dGTPase family. Type 1 subfamily.</text>
</comment>
<gene>
    <name evidence="1" type="primary">dgt</name>
    <name type="ordered locus">ECSE_0161</name>
</gene>
<reference key="1">
    <citation type="journal article" date="2008" name="DNA Res.">
        <title>Complete genome sequence and comparative analysis of the wild-type commensal Escherichia coli strain SE11 isolated from a healthy adult.</title>
        <authorList>
            <person name="Oshima K."/>
            <person name="Toh H."/>
            <person name="Ogura Y."/>
            <person name="Sasamoto H."/>
            <person name="Morita H."/>
            <person name="Park S.-H."/>
            <person name="Ooka T."/>
            <person name="Iyoda S."/>
            <person name="Taylor T.D."/>
            <person name="Hayashi T."/>
            <person name="Itoh K."/>
            <person name="Hattori M."/>
        </authorList>
    </citation>
    <scope>NUCLEOTIDE SEQUENCE [LARGE SCALE GENOMIC DNA]</scope>
    <source>
        <strain>SE11</strain>
    </source>
</reference>